<dbReference type="EMBL" id="DQ181912">
    <property type="protein sequence ID" value="ABA60124.1"/>
    <property type="molecule type" value="mRNA"/>
</dbReference>
<dbReference type="SMR" id="Q3HXY3"/>
<dbReference type="GO" id="GO:0030424">
    <property type="term" value="C:axon"/>
    <property type="evidence" value="ECO:0007669"/>
    <property type="project" value="TreeGrafter"/>
</dbReference>
<dbReference type="GO" id="GO:0030425">
    <property type="term" value="C:dendrite"/>
    <property type="evidence" value="ECO:0007669"/>
    <property type="project" value="TreeGrafter"/>
</dbReference>
<dbReference type="GO" id="GO:0005615">
    <property type="term" value="C:extracellular space"/>
    <property type="evidence" value="ECO:0007669"/>
    <property type="project" value="TreeGrafter"/>
</dbReference>
<dbReference type="GO" id="GO:0008021">
    <property type="term" value="C:synaptic vesicle"/>
    <property type="evidence" value="ECO:0007669"/>
    <property type="project" value="TreeGrafter"/>
</dbReference>
<dbReference type="GO" id="GO:0008083">
    <property type="term" value="F:growth factor activity"/>
    <property type="evidence" value="ECO:0007669"/>
    <property type="project" value="UniProtKB-KW"/>
</dbReference>
<dbReference type="GO" id="GO:0008289">
    <property type="term" value="F:lipid binding"/>
    <property type="evidence" value="ECO:0007669"/>
    <property type="project" value="UniProtKB-KW"/>
</dbReference>
<dbReference type="GO" id="GO:0008191">
    <property type="term" value="F:metalloendopeptidase inhibitor activity"/>
    <property type="evidence" value="ECO:0000250"/>
    <property type="project" value="UniProtKB"/>
</dbReference>
<dbReference type="GO" id="GO:0005163">
    <property type="term" value="F:nerve growth factor receptor binding"/>
    <property type="evidence" value="ECO:0007669"/>
    <property type="project" value="TreeGrafter"/>
</dbReference>
<dbReference type="GO" id="GO:0090729">
    <property type="term" value="F:toxin activity"/>
    <property type="evidence" value="ECO:0007669"/>
    <property type="project" value="UniProtKB-KW"/>
</dbReference>
<dbReference type="GO" id="GO:0007169">
    <property type="term" value="P:cell surface receptor protein tyrosine kinase signaling pathway"/>
    <property type="evidence" value="ECO:0007669"/>
    <property type="project" value="TreeGrafter"/>
</dbReference>
<dbReference type="GO" id="GO:0050804">
    <property type="term" value="P:modulation of chemical synaptic transmission"/>
    <property type="evidence" value="ECO:0007669"/>
    <property type="project" value="TreeGrafter"/>
</dbReference>
<dbReference type="GO" id="GO:0043524">
    <property type="term" value="P:negative regulation of neuron apoptotic process"/>
    <property type="evidence" value="ECO:0007669"/>
    <property type="project" value="TreeGrafter"/>
</dbReference>
<dbReference type="GO" id="GO:0021675">
    <property type="term" value="P:nerve development"/>
    <property type="evidence" value="ECO:0007669"/>
    <property type="project" value="TreeGrafter"/>
</dbReference>
<dbReference type="GO" id="GO:0038180">
    <property type="term" value="P:nerve growth factor signaling pathway"/>
    <property type="evidence" value="ECO:0007669"/>
    <property type="project" value="TreeGrafter"/>
</dbReference>
<dbReference type="GO" id="GO:0048812">
    <property type="term" value="P:neuron projection morphogenesis"/>
    <property type="evidence" value="ECO:0007669"/>
    <property type="project" value="TreeGrafter"/>
</dbReference>
<dbReference type="FunFam" id="2.10.90.10:FF:000002">
    <property type="entry name" value="Brain-derived neurotrophic factor"/>
    <property type="match status" value="1"/>
</dbReference>
<dbReference type="Gene3D" id="2.10.90.10">
    <property type="entry name" value="Cystine-knot cytokines"/>
    <property type="match status" value="1"/>
</dbReference>
<dbReference type="InterPro" id="IPR029034">
    <property type="entry name" value="Cystine-knot_cytokine"/>
</dbReference>
<dbReference type="InterPro" id="IPR020408">
    <property type="entry name" value="Nerve_growth_factor-like"/>
</dbReference>
<dbReference type="InterPro" id="IPR002072">
    <property type="entry name" value="Nerve_growth_factor-rel"/>
</dbReference>
<dbReference type="InterPro" id="IPR020425">
    <property type="entry name" value="Nerve_growth_factor_bsu"/>
</dbReference>
<dbReference type="InterPro" id="IPR019846">
    <property type="entry name" value="Nerve_growth_factor_CS"/>
</dbReference>
<dbReference type="InterPro" id="IPR020433">
    <property type="entry name" value="Venom_nerve_growth_factor"/>
</dbReference>
<dbReference type="PANTHER" id="PTHR11589:SF10">
    <property type="entry name" value="BETA-NERVE GROWTH FACTOR"/>
    <property type="match status" value="1"/>
</dbReference>
<dbReference type="PANTHER" id="PTHR11589">
    <property type="entry name" value="NERVE GROWTH FACTOR NGF -RELATED"/>
    <property type="match status" value="1"/>
</dbReference>
<dbReference type="Pfam" id="PF00243">
    <property type="entry name" value="NGF"/>
    <property type="match status" value="1"/>
</dbReference>
<dbReference type="PIRSF" id="PIRSF001789">
    <property type="entry name" value="NGF"/>
    <property type="match status" value="1"/>
</dbReference>
<dbReference type="PRINTS" id="PR00268">
    <property type="entry name" value="NGF"/>
</dbReference>
<dbReference type="PRINTS" id="PR01913">
    <property type="entry name" value="NGFBETA"/>
</dbReference>
<dbReference type="PRINTS" id="PR01917">
    <property type="entry name" value="VENOMNGF"/>
</dbReference>
<dbReference type="SMART" id="SM00140">
    <property type="entry name" value="NGF"/>
    <property type="match status" value="1"/>
</dbReference>
<dbReference type="SUPFAM" id="SSF57501">
    <property type="entry name" value="Cystine-knot cytokines"/>
    <property type="match status" value="1"/>
</dbReference>
<dbReference type="PROSITE" id="PS00248">
    <property type="entry name" value="NGF_1"/>
    <property type="match status" value="1"/>
</dbReference>
<dbReference type="PROSITE" id="PS50270">
    <property type="entry name" value="NGF_2"/>
    <property type="match status" value="1"/>
</dbReference>
<evidence type="ECO:0000250" key="1"/>
<evidence type="ECO:0000250" key="2">
    <source>
        <dbReference type="UniProtKB" id="P61898"/>
    </source>
</evidence>
<evidence type="ECO:0000250" key="3">
    <source>
        <dbReference type="UniProtKB" id="P61899"/>
    </source>
</evidence>
<evidence type="ECO:0000255" key="4"/>
<evidence type="ECO:0000305" key="5"/>
<accession>Q3HXY3</accession>
<keyword id="KW-0165">Cleavage on pair of basic residues</keyword>
<keyword id="KW-1015">Disulfide bond</keyword>
<keyword id="KW-0339">Growth factor</keyword>
<keyword id="KW-0446">Lipid-binding</keyword>
<keyword id="KW-0481">Metalloenzyme inhibitor</keyword>
<keyword id="KW-0483">Metalloprotease inhibitor</keyword>
<keyword id="KW-0646">Protease inhibitor</keyword>
<keyword id="KW-0964">Secreted</keyword>
<keyword id="KW-0732">Signal</keyword>
<keyword id="KW-0800">Toxin</keyword>
<feature type="signal peptide" evidence="4">
    <location>
        <begin position="1"/>
        <end position="18"/>
    </location>
</feature>
<feature type="propeptide" id="PRO_0000043304" evidence="1">
    <location>
        <begin position="19"/>
        <end position="125"/>
    </location>
</feature>
<feature type="chain" id="PRO_0000043305" description="Venom nerve growth factor 1">
    <location>
        <begin position="126"/>
        <end position="242"/>
    </location>
</feature>
<feature type="disulfide bond" evidence="2">
    <location>
        <begin position="139"/>
        <end position="203"/>
    </location>
</feature>
<feature type="disulfide bond" evidence="2">
    <location>
        <begin position="181"/>
        <end position="231"/>
    </location>
</feature>
<feature type="disulfide bond" evidence="2">
    <location>
        <begin position="191"/>
        <end position="233"/>
    </location>
</feature>
<organism>
    <name type="scientific">Pseudechis australis</name>
    <name type="common">Mulga snake</name>
    <name type="synonym">King brown snake</name>
    <dbReference type="NCBI Taxonomy" id="8670"/>
    <lineage>
        <taxon>Eukaryota</taxon>
        <taxon>Metazoa</taxon>
        <taxon>Chordata</taxon>
        <taxon>Craniata</taxon>
        <taxon>Vertebrata</taxon>
        <taxon>Euteleostomi</taxon>
        <taxon>Lepidosauria</taxon>
        <taxon>Squamata</taxon>
        <taxon>Bifurcata</taxon>
        <taxon>Unidentata</taxon>
        <taxon>Episquamata</taxon>
        <taxon>Toxicofera</taxon>
        <taxon>Serpentes</taxon>
        <taxon>Colubroidea</taxon>
        <taxon>Elapidae</taxon>
        <taxon>Hydrophiinae</taxon>
        <taxon>Pseudechis</taxon>
    </lineage>
</organism>
<proteinExistence type="evidence at transcript level"/>
<reference key="1">
    <citation type="submission" date="2005-08" db="EMBL/GenBank/DDBJ databases">
        <title>Identification of nerve growth factor as a ubiquitous component of Australian elapid snake venoms.</title>
        <authorList>
            <person name="Earl S.T.H."/>
            <person name="St Pierre L."/>
            <person name="Birrell G.W."/>
            <person name="Wallis T.P."/>
            <person name="Masci P.P."/>
            <person name="de Jersey J."/>
            <person name="Gorman J.J."/>
            <person name="Lavin M.F."/>
        </authorList>
    </citation>
    <scope>NUCLEOTIDE SEQUENCE [MRNA]</scope>
    <source>
        <tissue>Venom gland</tissue>
    </source>
</reference>
<comment type="function">
    <text evidence="2 3">Nerve growth factor is important for the development and maintenance of the sympathetic and sensory nervous systems. It stimulates division and differentiation of sympathetic and embryonic sensory neurons as well as basal forebrain cholinergic neurons in the brain. Its relevance in the snake venom is not clear. However, it has been shown to inhibit metalloproteinase-dependent proteolysis of platelet glycoprotein Ib alpha, suggesting a metalloproteinase inhibition to prevent metalloprotease autodigestion and/or protection against prey proteases (By similarity). Binds a lipid between the two protein chains in the homodimer. The lipid-bound form promotes histamine relase from mouse mast cells, contrary to the lipid-free form (By similarity).</text>
</comment>
<comment type="subunit">
    <text evidence="2">Homodimer; non-covalently linked.</text>
</comment>
<comment type="subcellular location">
    <subcellularLocation>
        <location evidence="2">Secreted</location>
    </subcellularLocation>
</comment>
<comment type="tissue specificity">
    <text>Expressed by the venom gland.</text>
</comment>
<comment type="similarity">
    <text evidence="5">Belongs to the NGF-beta family.</text>
</comment>
<sequence>MSMLCYTLIIAFLIGIWAAPQSEDNVPLGSPATSDLSDTSCAQTHEGLKTSRNTDQRHPAPKKVDDQELGSVANIIVDPKLFQKRQFQSSRVLFSTQPPPLSRDEQSVEFLDNEDALNRNIQAKRQNHPVHDLGEHSVCDSISEWVTKTTATDIKGNTVTVEVDVNLNNEVYKQYFFETKCRNPNPVPSGCRGIDSRLWNSYCTTTQTFVKALTMEGNQASWRFIRIDTACVCVITKKTDNL</sequence>
<name>NGFV1_PSEAU</name>
<protein>
    <recommendedName>
        <fullName>Venom nerve growth factor 1</fullName>
        <shortName>v-NGF-1</shortName>
        <shortName>vNGF-1</shortName>
    </recommendedName>
</protein>